<feature type="chain" id="PRO_1000134905" description="Phosphoribosylformylglycinamidine synthase subunit PurL">
    <location>
        <begin position="1"/>
        <end position="742"/>
    </location>
</feature>
<feature type="active site" evidence="1">
    <location>
        <position position="50"/>
    </location>
</feature>
<feature type="active site" description="Proton acceptor" evidence="1">
    <location>
        <position position="96"/>
    </location>
</feature>
<feature type="binding site" evidence="1">
    <location>
        <position position="53"/>
    </location>
    <ligand>
        <name>ATP</name>
        <dbReference type="ChEBI" id="CHEBI:30616"/>
    </ligand>
</feature>
<feature type="binding site" evidence="1">
    <location>
        <position position="92"/>
    </location>
    <ligand>
        <name>ATP</name>
        <dbReference type="ChEBI" id="CHEBI:30616"/>
    </ligand>
</feature>
<feature type="binding site" evidence="1">
    <location>
        <position position="94"/>
    </location>
    <ligand>
        <name>Mg(2+)</name>
        <dbReference type="ChEBI" id="CHEBI:18420"/>
        <label>1</label>
    </ligand>
</feature>
<feature type="binding site" evidence="1">
    <location>
        <begin position="95"/>
        <end position="98"/>
    </location>
    <ligand>
        <name>substrate</name>
    </ligand>
</feature>
<feature type="binding site" evidence="1">
    <location>
        <position position="117"/>
    </location>
    <ligand>
        <name>substrate</name>
    </ligand>
</feature>
<feature type="binding site" evidence="1">
    <location>
        <position position="118"/>
    </location>
    <ligand>
        <name>Mg(2+)</name>
        <dbReference type="ChEBI" id="CHEBI:18420"/>
        <label>2</label>
    </ligand>
</feature>
<feature type="binding site" evidence="1">
    <location>
        <position position="241"/>
    </location>
    <ligand>
        <name>substrate</name>
    </ligand>
</feature>
<feature type="binding site" evidence="1">
    <location>
        <position position="269"/>
    </location>
    <ligand>
        <name>Mg(2+)</name>
        <dbReference type="ChEBI" id="CHEBI:18420"/>
        <label>2</label>
    </ligand>
</feature>
<feature type="binding site" evidence="1">
    <location>
        <begin position="313"/>
        <end position="315"/>
    </location>
    <ligand>
        <name>substrate</name>
    </ligand>
</feature>
<feature type="binding site" evidence="1">
    <location>
        <position position="494"/>
    </location>
    <ligand>
        <name>ATP</name>
        <dbReference type="ChEBI" id="CHEBI:30616"/>
    </ligand>
</feature>
<feature type="binding site" evidence="1">
    <location>
        <position position="531"/>
    </location>
    <ligand>
        <name>ATP</name>
        <dbReference type="ChEBI" id="CHEBI:30616"/>
    </ligand>
</feature>
<feature type="binding site" evidence="1">
    <location>
        <position position="532"/>
    </location>
    <ligand>
        <name>Mg(2+)</name>
        <dbReference type="ChEBI" id="CHEBI:18420"/>
        <label>1</label>
    </ligand>
</feature>
<feature type="binding site" evidence="1">
    <location>
        <position position="534"/>
    </location>
    <ligand>
        <name>substrate</name>
    </ligand>
</feature>
<dbReference type="EC" id="6.3.5.3" evidence="1"/>
<dbReference type="EMBL" id="CP001389">
    <property type="protein sequence ID" value="ACP25391.1"/>
    <property type="molecule type" value="Genomic_DNA"/>
</dbReference>
<dbReference type="RefSeq" id="WP_012708160.1">
    <property type="nucleotide sequence ID" value="NC_012587.1"/>
</dbReference>
<dbReference type="RefSeq" id="YP_002826144.1">
    <property type="nucleotide sequence ID" value="NC_012587.1"/>
</dbReference>
<dbReference type="SMR" id="C3MD72"/>
<dbReference type="STRING" id="394.NGR_c16260"/>
<dbReference type="KEGG" id="rhi:NGR_c16260"/>
<dbReference type="PATRIC" id="fig|394.7.peg.4443"/>
<dbReference type="eggNOG" id="COG0046">
    <property type="taxonomic scope" value="Bacteria"/>
</dbReference>
<dbReference type="HOGENOM" id="CLU_003100_0_1_5"/>
<dbReference type="OrthoDB" id="9804441at2"/>
<dbReference type="UniPathway" id="UPA00074">
    <property type="reaction ID" value="UER00128"/>
</dbReference>
<dbReference type="Proteomes" id="UP000001054">
    <property type="component" value="Chromosome"/>
</dbReference>
<dbReference type="GO" id="GO:0005737">
    <property type="term" value="C:cytoplasm"/>
    <property type="evidence" value="ECO:0007669"/>
    <property type="project" value="UniProtKB-SubCell"/>
</dbReference>
<dbReference type="GO" id="GO:0005524">
    <property type="term" value="F:ATP binding"/>
    <property type="evidence" value="ECO:0007669"/>
    <property type="project" value="UniProtKB-UniRule"/>
</dbReference>
<dbReference type="GO" id="GO:0000287">
    <property type="term" value="F:magnesium ion binding"/>
    <property type="evidence" value="ECO:0007669"/>
    <property type="project" value="UniProtKB-UniRule"/>
</dbReference>
<dbReference type="GO" id="GO:0004642">
    <property type="term" value="F:phosphoribosylformylglycinamidine synthase activity"/>
    <property type="evidence" value="ECO:0007669"/>
    <property type="project" value="UniProtKB-UniRule"/>
</dbReference>
<dbReference type="GO" id="GO:0006189">
    <property type="term" value="P:'de novo' IMP biosynthetic process"/>
    <property type="evidence" value="ECO:0007669"/>
    <property type="project" value="UniProtKB-UniRule"/>
</dbReference>
<dbReference type="CDD" id="cd02203">
    <property type="entry name" value="PurL_repeat1"/>
    <property type="match status" value="1"/>
</dbReference>
<dbReference type="CDD" id="cd02204">
    <property type="entry name" value="PurL_repeat2"/>
    <property type="match status" value="1"/>
</dbReference>
<dbReference type="FunFam" id="3.30.1330.10:FF:000004">
    <property type="entry name" value="Phosphoribosylformylglycinamidine synthase subunit PurL"/>
    <property type="match status" value="1"/>
</dbReference>
<dbReference type="Gene3D" id="3.90.650.10">
    <property type="entry name" value="PurM-like C-terminal domain"/>
    <property type="match status" value="2"/>
</dbReference>
<dbReference type="Gene3D" id="3.30.1330.10">
    <property type="entry name" value="PurM-like, N-terminal domain"/>
    <property type="match status" value="2"/>
</dbReference>
<dbReference type="HAMAP" id="MF_00420">
    <property type="entry name" value="PurL_2"/>
    <property type="match status" value="1"/>
</dbReference>
<dbReference type="InterPro" id="IPR010074">
    <property type="entry name" value="PRibForGlyAmidine_synth_PurL"/>
</dbReference>
<dbReference type="InterPro" id="IPR041609">
    <property type="entry name" value="PurL_linker"/>
</dbReference>
<dbReference type="InterPro" id="IPR010918">
    <property type="entry name" value="PurM-like_C_dom"/>
</dbReference>
<dbReference type="InterPro" id="IPR036676">
    <property type="entry name" value="PurM-like_C_sf"/>
</dbReference>
<dbReference type="InterPro" id="IPR016188">
    <property type="entry name" value="PurM-like_N"/>
</dbReference>
<dbReference type="InterPro" id="IPR036921">
    <property type="entry name" value="PurM-like_N_sf"/>
</dbReference>
<dbReference type="NCBIfam" id="TIGR01736">
    <property type="entry name" value="FGAM_synth_II"/>
    <property type="match status" value="1"/>
</dbReference>
<dbReference type="NCBIfam" id="NF002290">
    <property type="entry name" value="PRK01213.1"/>
    <property type="match status" value="1"/>
</dbReference>
<dbReference type="PANTHER" id="PTHR43555">
    <property type="entry name" value="PHOSPHORIBOSYLFORMYLGLYCINAMIDINE SYNTHASE SUBUNIT PURL"/>
    <property type="match status" value="1"/>
</dbReference>
<dbReference type="PANTHER" id="PTHR43555:SF1">
    <property type="entry name" value="PHOSPHORIBOSYLFORMYLGLYCINAMIDINE SYNTHASE SUBUNIT PURL"/>
    <property type="match status" value="1"/>
</dbReference>
<dbReference type="Pfam" id="PF00586">
    <property type="entry name" value="AIRS"/>
    <property type="match status" value="2"/>
</dbReference>
<dbReference type="Pfam" id="PF02769">
    <property type="entry name" value="AIRS_C"/>
    <property type="match status" value="2"/>
</dbReference>
<dbReference type="Pfam" id="PF18072">
    <property type="entry name" value="FGAR-AT_linker"/>
    <property type="match status" value="1"/>
</dbReference>
<dbReference type="PIRSF" id="PIRSF001587">
    <property type="entry name" value="FGAM_synthase_II"/>
    <property type="match status" value="1"/>
</dbReference>
<dbReference type="SUPFAM" id="SSF56042">
    <property type="entry name" value="PurM C-terminal domain-like"/>
    <property type="match status" value="2"/>
</dbReference>
<dbReference type="SUPFAM" id="SSF55326">
    <property type="entry name" value="PurM N-terminal domain-like"/>
    <property type="match status" value="2"/>
</dbReference>
<reference key="1">
    <citation type="journal article" date="2009" name="Appl. Environ. Microbiol.">
        <title>Rhizobium sp. strain NGR234 possesses a remarkable number of secretion systems.</title>
        <authorList>
            <person name="Schmeisser C."/>
            <person name="Liesegang H."/>
            <person name="Krysciak D."/>
            <person name="Bakkou N."/>
            <person name="Le Quere A."/>
            <person name="Wollherr A."/>
            <person name="Heinemeyer I."/>
            <person name="Morgenstern B."/>
            <person name="Pommerening-Roeser A."/>
            <person name="Flores M."/>
            <person name="Palacios R."/>
            <person name="Brenner S."/>
            <person name="Gottschalk G."/>
            <person name="Schmitz R.A."/>
            <person name="Broughton W.J."/>
            <person name="Perret X."/>
            <person name="Strittmatter A.W."/>
            <person name="Streit W.R."/>
        </authorList>
    </citation>
    <scope>NUCLEOTIDE SEQUENCE [LARGE SCALE GENOMIC DNA]</scope>
    <source>
        <strain>NBRC 101917 / NGR234</strain>
    </source>
</reference>
<comment type="function">
    <text evidence="1">Part of the phosphoribosylformylglycinamidine synthase complex involved in the purines biosynthetic pathway. Catalyzes the ATP-dependent conversion of formylglycinamide ribonucleotide (FGAR) and glutamine to yield formylglycinamidine ribonucleotide (FGAM) and glutamate. The FGAM synthase complex is composed of three subunits. PurQ produces an ammonia molecule by converting glutamine to glutamate. PurL transfers the ammonia molecule to FGAR to form FGAM in an ATP-dependent manner. PurS interacts with PurQ and PurL and is thought to assist in the transfer of the ammonia molecule from PurQ to PurL.</text>
</comment>
<comment type="catalytic activity">
    <reaction evidence="1">
        <text>N(2)-formyl-N(1)-(5-phospho-beta-D-ribosyl)glycinamide + L-glutamine + ATP + H2O = 2-formamido-N(1)-(5-O-phospho-beta-D-ribosyl)acetamidine + L-glutamate + ADP + phosphate + H(+)</text>
        <dbReference type="Rhea" id="RHEA:17129"/>
        <dbReference type="ChEBI" id="CHEBI:15377"/>
        <dbReference type="ChEBI" id="CHEBI:15378"/>
        <dbReference type="ChEBI" id="CHEBI:29985"/>
        <dbReference type="ChEBI" id="CHEBI:30616"/>
        <dbReference type="ChEBI" id="CHEBI:43474"/>
        <dbReference type="ChEBI" id="CHEBI:58359"/>
        <dbReference type="ChEBI" id="CHEBI:147286"/>
        <dbReference type="ChEBI" id="CHEBI:147287"/>
        <dbReference type="ChEBI" id="CHEBI:456216"/>
        <dbReference type="EC" id="6.3.5.3"/>
    </reaction>
</comment>
<comment type="pathway">
    <text evidence="1">Purine metabolism; IMP biosynthesis via de novo pathway; 5-amino-1-(5-phospho-D-ribosyl)imidazole from N(2)-formyl-N(1)-(5-phospho-D-ribosyl)glycinamide: step 1/2.</text>
</comment>
<comment type="subunit">
    <text evidence="1">Monomer. Part of the FGAM synthase complex composed of 1 PurL, 1 PurQ and 2 PurS subunits.</text>
</comment>
<comment type="subcellular location">
    <subcellularLocation>
        <location evidence="1">Cytoplasm</location>
    </subcellularLocation>
</comment>
<comment type="similarity">
    <text evidence="1">Belongs to the FGAMS family.</text>
</comment>
<keyword id="KW-0067">ATP-binding</keyword>
<keyword id="KW-0963">Cytoplasm</keyword>
<keyword id="KW-0436">Ligase</keyword>
<keyword id="KW-0460">Magnesium</keyword>
<keyword id="KW-0479">Metal-binding</keyword>
<keyword id="KW-0547">Nucleotide-binding</keyword>
<keyword id="KW-0658">Purine biosynthesis</keyword>
<keyword id="KW-1185">Reference proteome</keyword>
<protein>
    <recommendedName>
        <fullName evidence="1">Phosphoribosylformylglycinamidine synthase subunit PurL</fullName>
        <shortName evidence="1">FGAM synthase</shortName>
        <ecNumber evidence="1">6.3.5.3</ecNumber>
    </recommendedName>
    <alternativeName>
        <fullName evidence="1">Formylglycinamide ribonucleotide amidotransferase subunit II</fullName>
        <shortName evidence="1">FGAR amidotransferase II</shortName>
        <shortName evidence="1">FGAR-AT II</shortName>
    </alternativeName>
    <alternativeName>
        <fullName evidence="1">Glutamine amidotransferase PurL</fullName>
    </alternativeName>
    <alternativeName>
        <fullName evidence="1">Phosphoribosylformylglycinamidine synthase subunit II</fullName>
    </alternativeName>
</protein>
<organism>
    <name type="scientific">Sinorhizobium fredii (strain NBRC 101917 / NGR234)</name>
    <dbReference type="NCBI Taxonomy" id="394"/>
    <lineage>
        <taxon>Bacteria</taxon>
        <taxon>Pseudomonadati</taxon>
        <taxon>Pseudomonadota</taxon>
        <taxon>Alphaproteobacteria</taxon>
        <taxon>Hyphomicrobiales</taxon>
        <taxon>Rhizobiaceae</taxon>
        <taxon>Sinorhizobium/Ensifer group</taxon>
        <taxon>Sinorhizobium</taxon>
    </lineage>
</organism>
<proteinExistence type="inferred from homology"/>
<gene>
    <name evidence="1" type="primary">purL</name>
    <name type="ordered locus">NGR_c16260</name>
</gene>
<name>PURL_SINFN</name>
<accession>C3MD72</accession>
<evidence type="ECO:0000255" key="1">
    <source>
        <dbReference type="HAMAP-Rule" id="MF_00420"/>
    </source>
</evidence>
<sequence>MTISNTRPITPDLIASHGLKPDEYERILNLIGREPTFTELGIFSAMWNEHCSYKSSKKWLRMLPTKGPRVIQGPGENAGVVDIDDGDCVVFKMESHNHPSYIEPYQGAATGVGGILRDVFTMGARPIAAMNALRFGSPDHPKTRHLVSGVVAGVGGYGNSFGVPTVGGEVEFDARYNGNILVNAFAAGLAKSDAIFYSKAEGVGLPVVYLGAKTGRDGVGGATMASAEFDESIEEKRPTVQVGDPFTEKCLLEACLELMQTGAVIAIQDMGAAGLTCSAVEMGAKGDLGIELDLDKVPVREEHMTAYEMMLSESQERMLMVLRPEKEEEAKAIFVKWGLDFAIVGKTTDDLRFRILHQGDEVANLPIKELGDEAPEYDRPWTPAKTPSPLATNDIPQADVAEALLKLVGSANNSSRRWVYEQYDTLIQGNSLQLPGGDAGVVRVEGHATKALAFSSDVTPRYVEADPYEGGKQAVAECWRNLTATGALPLAATDNLNFGNPERPEIMSQFVHAIKGIGEACRALDFPIVSGNVSLYNETNGQGILPTPTIGGVGLISDWARMARIRFAAADEAILLAGAPEGMGSHIAQSVYMRDIHGRTDGPAPHVDLAHERKIGDFVRDLIADGLVTAVHDCSSGGLALAVAEMAIASGIGATIAAPENDPIAAFYGEDQGRYVVTVAADKIDAVAARAAVAGIDLPVIGKTGGDSVKLGDANTVSVNELRSAHEAWFPTYMGGDLAPDN</sequence>